<proteinExistence type="inferred from homology"/>
<gene>
    <name evidence="1" type="primary">rplV</name>
    <name type="ordered locus">PSPPH_4587</name>
</gene>
<evidence type="ECO:0000255" key="1">
    <source>
        <dbReference type="HAMAP-Rule" id="MF_01331"/>
    </source>
</evidence>
<evidence type="ECO:0000305" key="2"/>
<sequence length="110" mass="11893">MEVAAKLSGARISAQKARLVADQIRGKKVGEALNLLAFSSKKAAEILKKVLESAVANAEHNEGADVDDLKVSTVFVNEGRSLKRIMPRAKGRADRIVKRSCHITVKVADK</sequence>
<name>RL22_PSE14</name>
<organism>
    <name type="scientific">Pseudomonas savastanoi pv. phaseolicola (strain 1448A / Race 6)</name>
    <name type="common">Pseudomonas syringae pv. phaseolicola (strain 1448A / Race 6)</name>
    <dbReference type="NCBI Taxonomy" id="264730"/>
    <lineage>
        <taxon>Bacteria</taxon>
        <taxon>Pseudomonadati</taxon>
        <taxon>Pseudomonadota</taxon>
        <taxon>Gammaproteobacteria</taxon>
        <taxon>Pseudomonadales</taxon>
        <taxon>Pseudomonadaceae</taxon>
        <taxon>Pseudomonas</taxon>
    </lineage>
</organism>
<accession>Q48D41</accession>
<keyword id="KW-0687">Ribonucleoprotein</keyword>
<keyword id="KW-0689">Ribosomal protein</keyword>
<keyword id="KW-0694">RNA-binding</keyword>
<keyword id="KW-0699">rRNA-binding</keyword>
<comment type="function">
    <text evidence="1">This protein binds specifically to 23S rRNA; its binding is stimulated by other ribosomal proteins, e.g. L4, L17, and L20. It is important during the early stages of 50S assembly. It makes multiple contacts with different domains of the 23S rRNA in the assembled 50S subunit and ribosome (By similarity).</text>
</comment>
<comment type="function">
    <text evidence="1">The globular domain of the protein is located near the polypeptide exit tunnel on the outside of the subunit, while an extended beta-hairpin is found that lines the wall of the exit tunnel in the center of the 70S ribosome.</text>
</comment>
<comment type="subunit">
    <text evidence="1">Part of the 50S ribosomal subunit.</text>
</comment>
<comment type="similarity">
    <text evidence="1">Belongs to the universal ribosomal protein uL22 family.</text>
</comment>
<feature type="chain" id="PRO_0000243187" description="Large ribosomal subunit protein uL22">
    <location>
        <begin position="1"/>
        <end position="110"/>
    </location>
</feature>
<reference key="1">
    <citation type="journal article" date="2005" name="J. Bacteriol.">
        <title>Whole-genome sequence analysis of Pseudomonas syringae pv. phaseolicola 1448A reveals divergence among pathovars in genes involved in virulence and transposition.</title>
        <authorList>
            <person name="Joardar V."/>
            <person name="Lindeberg M."/>
            <person name="Jackson R.W."/>
            <person name="Selengut J."/>
            <person name="Dodson R."/>
            <person name="Brinkac L.M."/>
            <person name="Daugherty S.C."/>
            <person name="DeBoy R.T."/>
            <person name="Durkin A.S."/>
            <person name="Gwinn Giglio M."/>
            <person name="Madupu R."/>
            <person name="Nelson W.C."/>
            <person name="Rosovitz M.J."/>
            <person name="Sullivan S.A."/>
            <person name="Crabtree J."/>
            <person name="Creasy T."/>
            <person name="Davidsen T.M."/>
            <person name="Haft D.H."/>
            <person name="Zafar N."/>
            <person name="Zhou L."/>
            <person name="Halpin R."/>
            <person name="Holley T."/>
            <person name="Khouri H.M."/>
            <person name="Feldblyum T.V."/>
            <person name="White O."/>
            <person name="Fraser C.M."/>
            <person name="Chatterjee A.K."/>
            <person name="Cartinhour S."/>
            <person name="Schneider D."/>
            <person name="Mansfield J.W."/>
            <person name="Collmer A."/>
            <person name="Buell R."/>
        </authorList>
    </citation>
    <scope>NUCLEOTIDE SEQUENCE [LARGE SCALE GENOMIC DNA]</scope>
    <source>
        <strain>1448A / Race 6</strain>
    </source>
</reference>
<protein>
    <recommendedName>
        <fullName evidence="1">Large ribosomal subunit protein uL22</fullName>
    </recommendedName>
    <alternativeName>
        <fullName evidence="2">50S ribosomal protein L22</fullName>
    </alternativeName>
</protein>
<dbReference type="EMBL" id="CP000058">
    <property type="protein sequence ID" value="AAZ35852.1"/>
    <property type="molecule type" value="Genomic_DNA"/>
</dbReference>
<dbReference type="RefSeq" id="WP_002555485.1">
    <property type="nucleotide sequence ID" value="NC_005773.3"/>
</dbReference>
<dbReference type="SMR" id="Q48D41"/>
<dbReference type="GeneID" id="96221025"/>
<dbReference type="KEGG" id="psp:PSPPH_4587"/>
<dbReference type="eggNOG" id="COG0091">
    <property type="taxonomic scope" value="Bacteria"/>
</dbReference>
<dbReference type="HOGENOM" id="CLU_083987_3_3_6"/>
<dbReference type="Proteomes" id="UP000000551">
    <property type="component" value="Chromosome"/>
</dbReference>
<dbReference type="GO" id="GO:0022625">
    <property type="term" value="C:cytosolic large ribosomal subunit"/>
    <property type="evidence" value="ECO:0007669"/>
    <property type="project" value="TreeGrafter"/>
</dbReference>
<dbReference type="GO" id="GO:0019843">
    <property type="term" value="F:rRNA binding"/>
    <property type="evidence" value="ECO:0007669"/>
    <property type="project" value="UniProtKB-UniRule"/>
</dbReference>
<dbReference type="GO" id="GO:0003735">
    <property type="term" value="F:structural constituent of ribosome"/>
    <property type="evidence" value="ECO:0007669"/>
    <property type="project" value="InterPro"/>
</dbReference>
<dbReference type="GO" id="GO:0006412">
    <property type="term" value="P:translation"/>
    <property type="evidence" value="ECO:0007669"/>
    <property type="project" value="UniProtKB-UniRule"/>
</dbReference>
<dbReference type="CDD" id="cd00336">
    <property type="entry name" value="Ribosomal_L22"/>
    <property type="match status" value="1"/>
</dbReference>
<dbReference type="FunFam" id="3.90.470.10:FF:000001">
    <property type="entry name" value="50S ribosomal protein L22"/>
    <property type="match status" value="1"/>
</dbReference>
<dbReference type="Gene3D" id="3.90.470.10">
    <property type="entry name" value="Ribosomal protein L22/L17"/>
    <property type="match status" value="1"/>
</dbReference>
<dbReference type="HAMAP" id="MF_01331_B">
    <property type="entry name" value="Ribosomal_uL22_B"/>
    <property type="match status" value="1"/>
</dbReference>
<dbReference type="InterPro" id="IPR001063">
    <property type="entry name" value="Ribosomal_uL22"/>
</dbReference>
<dbReference type="InterPro" id="IPR005727">
    <property type="entry name" value="Ribosomal_uL22_bac/chlpt-type"/>
</dbReference>
<dbReference type="InterPro" id="IPR047867">
    <property type="entry name" value="Ribosomal_uL22_bac/org-type"/>
</dbReference>
<dbReference type="InterPro" id="IPR018260">
    <property type="entry name" value="Ribosomal_uL22_CS"/>
</dbReference>
<dbReference type="InterPro" id="IPR036394">
    <property type="entry name" value="Ribosomal_uL22_sf"/>
</dbReference>
<dbReference type="NCBIfam" id="TIGR01044">
    <property type="entry name" value="rplV_bact"/>
    <property type="match status" value="1"/>
</dbReference>
<dbReference type="PANTHER" id="PTHR13501">
    <property type="entry name" value="CHLOROPLAST 50S RIBOSOMAL PROTEIN L22-RELATED"/>
    <property type="match status" value="1"/>
</dbReference>
<dbReference type="PANTHER" id="PTHR13501:SF8">
    <property type="entry name" value="LARGE RIBOSOMAL SUBUNIT PROTEIN UL22M"/>
    <property type="match status" value="1"/>
</dbReference>
<dbReference type="Pfam" id="PF00237">
    <property type="entry name" value="Ribosomal_L22"/>
    <property type="match status" value="1"/>
</dbReference>
<dbReference type="SUPFAM" id="SSF54843">
    <property type="entry name" value="Ribosomal protein L22"/>
    <property type="match status" value="1"/>
</dbReference>
<dbReference type="PROSITE" id="PS00464">
    <property type="entry name" value="RIBOSOMAL_L22"/>
    <property type="match status" value="1"/>
</dbReference>